<accession>A6U9N4</accession>
<reference key="1">
    <citation type="submission" date="2007-06" db="EMBL/GenBank/DDBJ databases">
        <title>Complete sequence of Sinorhizobium medicae WSM419 chromosome.</title>
        <authorList>
            <consortium name="US DOE Joint Genome Institute"/>
            <person name="Copeland A."/>
            <person name="Lucas S."/>
            <person name="Lapidus A."/>
            <person name="Barry K."/>
            <person name="Glavina del Rio T."/>
            <person name="Dalin E."/>
            <person name="Tice H."/>
            <person name="Pitluck S."/>
            <person name="Chain P."/>
            <person name="Malfatti S."/>
            <person name="Shin M."/>
            <person name="Vergez L."/>
            <person name="Schmutz J."/>
            <person name="Larimer F."/>
            <person name="Land M."/>
            <person name="Hauser L."/>
            <person name="Kyrpides N."/>
            <person name="Mikhailova N."/>
            <person name="Reeve W.G."/>
            <person name="Richardson P."/>
        </authorList>
    </citation>
    <scope>NUCLEOTIDE SEQUENCE [LARGE SCALE GENOMIC DNA]</scope>
    <source>
        <strain>WSM419</strain>
    </source>
</reference>
<evidence type="ECO:0000255" key="1">
    <source>
        <dbReference type="HAMAP-Rule" id="MF_00036"/>
    </source>
</evidence>
<protein>
    <recommendedName>
        <fullName evidence="1">Alanine--tRNA ligase</fullName>
        <ecNumber evidence="1">6.1.1.7</ecNumber>
    </recommendedName>
    <alternativeName>
        <fullName evidence="1">Alanyl-tRNA synthetase</fullName>
        <shortName evidence="1">AlaRS</shortName>
    </alternativeName>
</protein>
<keyword id="KW-0030">Aminoacyl-tRNA synthetase</keyword>
<keyword id="KW-0067">ATP-binding</keyword>
<keyword id="KW-0963">Cytoplasm</keyword>
<keyword id="KW-0436">Ligase</keyword>
<keyword id="KW-0479">Metal-binding</keyword>
<keyword id="KW-0547">Nucleotide-binding</keyword>
<keyword id="KW-0648">Protein biosynthesis</keyword>
<keyword id="KW-0694">RNA-binding</keyword>
<keyword id="KW-0820">tRNA-binding</keyword>
<keyword id="KW-0862">Zinc</keyword>
<dbReference type="EC" id="6.1.1.7" evidence="1"/>
<dbReference type="EMBL" id="CP000738">
    <property type="protein sequence ID" value="ABR60364.1"/>
    <property type="molecule type" value="Genomic_DNA"/>
</dbReference>
<dbReference type="RefSeq" id="WP_011975673.1">
    <property type="nucleotide sequence ID" value="NC_009636.1"/>
</dbReference>
<dbReference type="RefSeq" id="YP_001327199.1">
    <property type="nucleotide sequence ID" value="NC_009636.1"/>
</dbReference>
<dbReference type="SMR" id="A6U9N4"/>
<dbReference type="STRING" id="366394.Smed_1521"/>
<dbReference type="KEGG" id="smd:Smed_1521"/>
<dbReference type="PATRIC" id="fig|366394.8.peg.4653"/>
<dbReference type="eggNOG" id="COG0013">
    <property type="taxonomic scope" value="Bacteria"/>
</dbReference>
<dbReference type="HOGENOM" id="CLU_004485_1_1_5"/>
<dbReference type="OrthoDB" id="9803884at2"/>
<dbReference type="Proteomes" id="UP000001108">
    <property type="component" value="Chromosome"/>
</dbReference>
<dbReference type="GO" id="GO:0005829">
    <property type="term" value="C:cytosol"/>
    <property type="evidence" value="ECO:0007669"/>
    <property type="project" value="TreeGrafter"/>
</dbReference>
<dbReference type="GO" id="GO:0004813">
    <property type="term" value="F:alanine-tRNA ligase activity"/>
    <property type="evidence" value="ECO:0007669"/>
    <property type="project" value="UniProtKB-UniRule"/>
</dbReference>
<dbReference type="GO" id="GO:0002161">
    <property type="term" value="F:aminoacyl-tRNA deacylase activity"/>
    <property type="evidence" value="ECO:0007669"/>
    <property type="project" value="TreeGrafter"/>
</dbReference>
<dbReference type="GO" id="GO:0005524">
    <property type="term" value="F:ATP binding"/>
    <property type="evidence" value="ECO:0007669"/>
    <property type="project" value="UniProtKB-UniRule"/>
</dbReference>
<dbReference type="GO" id="GO:0000049">
    <property type="term" value="F:tRNA binding"/>
    <property type="evidence" value="ECO:0007669"/>
    <property type="project" value="UniProtKB-KW"/>
</dbReference>
<dbReference type="GO" id="GO:0008270">
    <property type="term" value="F:zinc ion binding"/>
    <property type="evidence" value="ECO:0007669"/>
    <property type="project" value="UniProtKB-UniRule"/>
</dbReference>
<dbReference type="GO" id="GO:0006419">
    <property type="term" value="P:alanyl-tRNA aminoacylation"/>
    <property type="evidence" value="ECO:0007669"/>
    <property type="project" value="UniProtKB-UniRule"/>
</dbReference>
<dbReference type="GO" id="GO:0045892">
    <property type="term" value="P:negative regulation of DNA-templated transcription"/>
    <property type="evidence" value="ECO:0007669"/>
    <property type="project" value="TreeGrafter"/>
</dbReference>
<dbReference type="CDD" id="cd00673">
    <property type="entry name" value="AlaRS_core"/>
    <property type="match status" value="1"/>
</dbReference>
<dbReference type="FunFam" id="2.40.30.130:FF:000001">
    <property type="entry name" value="Alanine--tRNA ligase"/>
    <property type="match status" value="1"/>
</dbReference>
<dbReference type="FunFam" id="3.10.310.40:FF:000001">
    <property type="entry name" value="Alanine--tRNA ligase"/>
    <property type="match status" value="1"/>
</dbReference>
<dbReference type="FunFam" id="3.30.54.20:FF:000001">
    <property type="entry name" value="Alanine--tRNA ligase"/>
    <property type="match status" value="1"/>
</dbReference>
<dbReference type="FunFam" id="3.30.930.10:FF:000004">
    <property type="entry name" value="Alanine--tRNA ligase"/>
    <property type="match status" value="1"/>
</dbReference>
<dbReference type="FunFam" id="3.30.980.10:FF:000004">
    <property type="entry name" value="Alanine--tRNA ligase, cytoplasmic"/>
    <property type="match status" value="1"/>
</dbReference>
<dbReference type="Gene3D" id="2.40.30.130">
    <property type="match status" value="1"/>
</dbReference>
<dbReference type="Gene3D" id="3.10.310.40">
    <property type="match status" value="1"/>
</dbReference>
<dbReference type="Gene3D" id="3.30.54.20">
    <property type="match status" value="1"/>
</dbReference>
<dbReference type="Gene3D" id="6.10.250.550">
    <property type="match status" value="1"/>
</dbReference>
<dbReference type="Gene3D" id="3.30.930.10">
    <property type="entry name" value="Bira Bifunctional Protein, Domain 2"/>
    <property type="match status" value="1"/>
</dbReference>
<dbReference type="Gene3D" id="3.30.980.10">
    <property type="entry name" value="Threonyl-trna Synthetase, Chain A, domain 2"/>
    <property type="match status" value="1"/>
</dbReference>
<dbReference type="HAMAP" id="MF_00036_B">
    <property type="entry name" value="Ala_tRNA_synth_B"/>
    <property type="match status" value="1"/>
</dbReference>
<dbReference type="InterPro" id="IPR045864">
    <property type="entry name" value="aa-tRNA-synth_II/BPL/LPL"/>
</dbReference>
<dbReference type="InterPro" id="IPR002318">
    <property type="entry name" value="Ala-tRNA-lgiase_IIc"/>
</dbReference>
<dbReference type="InterPro" id="IPR018162">
    <property type="entry name" value="Ala-tRNA-ligase_IIc_anticod-bd"/>
</dbReference>
<dbReference type="InterPro" id="IPR018165">
    <property type="entry name" value="Ala-tRNA-synth_IIc_core"/>
</dbReference>
<dbReference type="InterPro" id="IPR018164">
    <property type="entry name" value="Ala-tRNA-synth_IIc_N"/>
</dbReference>
<dbReference type="InterPro" id="IPR050058">
    <property type="entry name" value="Ala-tRNA_ligase"/>
</dbReference>
<dbReference type="InterPro" id="IPR023033">
    <property type="entry name" value="Ala_tRNA_ligase_euk/bac"/>
</dbReference>
<dbReference type="InterPro" id="IPR003156">
    <property type="entry name" value="DHHA1_dom"/>
</dbReference>
<dbReference type="InterPro" id="IPR018163">
    <property type="entry name" value="Thr/Ala-tRNA-synth_IIc_edit"/>
</dbReference>
<dbReference type="InterPro" id="IPR009000">
    <property type="entry name" value="Transl_B-barrel_sf"/>
</dbReference>
<dbReference type="InterPro" id="IPR012947">
    <property type="entry name" value="tRNA_SAD"/>
</dbReference>
<dbReference type="NCBIfam" id="TIGR00344">
    <property type="entry name" value="alaS"/>
    <property type="match status" value="1"/>
</dbReference>
<dbReference type="PANTHER" id="PTHR11777:SF9">
    <property type="entry name" value="ALANINE--TRNA LIGASE, CYTOPLASMIC"/>
    <property type="match status" value="1"/>
</dbReference>
<dbReference type="PANTHER" id="PTHR11777">
    <property type="entry name" value="ALANYL-TRNA SYNTHETASE"/>
    <property type="match status" value="1"/>
</dbReference>
<dbReference type="Pfam" id="PF02272">
    <property type="entry name" value="DHHA1"/>
    <property type="match status" value="1"/>
</dbReference>
<dbReference type="Pfam" id="PF01411">
    <property type="entry name" value="tRNA-synt_2c"/>
    <property type="match status" value="1"/>
</dbReference>
<dbReference type="Pfam" id="PF07973">
    <property type="entry name" value="tRNA_SAD"/>
    <property type="match status" value="1"/>
</dbReference>
<dbReference type="PRINTS" id="PR00980">
    <property type="entry name" value="TRNASYNTHALA"/>
</dbReference>
<dbReference type="SMART" id="SM00863">
    <property type="entry name" value="tRNA_SAD"/>
    <property type="match status" value="1"/>
</dbReference>
<dbReference type="SUPFAM" id="SSF55681">
    <property type="entry name" value="Class II aaRS and biotin synthetases"/>
    <property type="match status" value="1"/>
</dbReference>
<dbReference type="SUPFAM" id="SSF101353">
    <property type="entry name" value="Putative anticodon-binding domain of alanyl-tRNA synthetase (AlaRS)"/>
    <property type="match status" value="1"/>
</dbReference>
<dbReference type="SUPFAM" id="SSF55186">
    <property type="entry name" value="ThrRS/AlaRS common domain"/>
    <property type="match status" value="1"/>
</dbReference>
<dbReference type="SUPFAM" id="SSF50447">
    <property type="entry name" value="Translation proteins"/>
    <property type="match status" value="1"/>
</dbReference>
<dbReference type="PROSITE" id="PS50860">
    <property type="entry name" value="AA_TRNA_LIGASE_II_ALA"/>
    <property type="match status" value="1"/>
</dbReference>
<proteinExistence type="inferred from homology"/>
<name>SYA_SINMW</name>
<sequence>MSGVNEIRSMFLDYFRKNGHEVVPSSPLVPRNDPTLMFTNAGMVQFKNVFTGLEQRPYSTAATAQKCVRAGGKHNDLDNVGYTARHHTFFEMLGNFSFGDYFKERAIELAWNLITKEYGLDAKRLLVTVYHTDDEAFGLWKKIAGLSDDRIIRIATSDNFWAMGDTGPCGPCSEIFYDHGDHIWGGPPGSADEDGDRFIEIWNLVFMQYEQITKEERVDLPRPSIDTGMGLERLAAVLQGQHDNYDIDLFRALIAASEEATGVKAEGDRRASHRVIADHLRSSAFLIADGVLPSNEGRGYVLRRIMRRAMRHAQLLGAQDPLMWKLLPALVGQMGRAYPELVRAEALISETLKLEETRFRKTLERGLNLLEEASADLSEGDQFNGETAFKLYDTYGFPLDLTQDALRAKGIGVDTDAFTAAMQRQKAEARANWTGSGDAATETIWFELRDKHGATDFLGYDTESAEGVIQAIVRDGTVVESASKGETVQLVLNQTPFYGESGGQVGDTGVVTTESGKLTVTDTQKRGEGLFVHYCVVEEGSVKTGEAAALAVDHARRTRLRANHSATHLLHEALREVLGTHVSQKGSLVAPERLRFDVSHPKPMTSEELKVVEEMANEIIVQNTPVVTRLMSVDDAIAEGAMALFGEKYGDEVRVVSMGQGLHGSKAGKAYSVELCGGTHVSATGDIGLVRIVSESAVGSGVRRVEALTGEAARAYLGEQDERVKALAAALKVQPSDVLGRVESLLDERRKLERELTEAKKKLALAGDGQNGSGEAAREIGGVRFLGRVVSGVEPKDLKSLADDGKKTLGSGVVAFVGVSGDGKASAVVAVTDDLTSKVSAVDLVRVASAALGGKGGGGRPDMAQAGGPDGGRAAEAIEAVAVALAG</sequence>
<comment type="function">
    <text evidence="1">Catalyzes the attachment of alanine to tRNA(Ala) in a two-step reaction: alanine is first activated by ATP to form Ala-AMP and then transferred to the acceptor end of tRNA(Ala). Also edits incorrectly charged Ser-tRNA(Ala) and Gly-tRNA(Ala) via its editing domain.</text>
</comment>
<comment type="catalytic activity">
    <reaction evidence="1">
        <text>tRNA(Ala) + L-alanine + ATP = L-alanyl-tRNA(Ala) + AMP + diphosphate</text>
        <dbReference type="Rhea" id="RHEA:12540"/>
        <dbReference type="Rhea" id="RHEA-COMP:9657"/>
        <dbReference type="Rhea" id="RHEA-COMP:9923"/>
        <dbReference type="ChEBI" id="CHEBI:30616"/>
        <dbReference type="ChEBI" id="CHEBI:33019"/>
        <dbReference type="ChEBI" id="CHEBI:57972"/>
        <dbReference type="ChEBI" id="CHEBI:78442"/>
        <dbReference type="ChEBI" id="CHEBI:78497"/>
        <dbReference type="ChEBI" id="CHEBI:456215"/>
        <dbReference type="EC" id="6.1.1.7"/>
    </reaction>
</comment>
<comment type="cofactor">
    <cofactor evidence="1">
        <name>Zn(2+)</name>
        <dbReference type="ChEBI" id="CHEBI:29105"/>
    </cofactor>
    <text evidence="1">Binds 1 zinc ion per subunit.</text>
</comment>
<comment type="subcellular location">
    <subcellularLocation>
        <location evidence="1">Cytoplasm</location>
    </subcellularLocation>
</comment>
<comment type="domain">
    <text evidence="1">Consists of three domains; the N-terminal catalytic domain, the editing domain and the C-terminal C-Ala domain. The editing domain removes incorrectly charged amino acids, while the C-Ala domain, along with tRNA(Ala), serves as a bridge to cooperatively bring together the editing and aminoacylation centers thus stimulating deacylation of misacylated tRNAs.</text>
</comment>
<comment type="similarity">
    <text evidence="1">Belongs to the class-II aminoacyl-tRNA synthetase family.</text>
</comment>
<gene>
    <name evidence="1" type="primary">alaS</name>
    <name type="ordered locus">Smed_1521</name>
</gene>
<feature type="chain" id="PRO_0000347802" description="Alanine--tRNA ligase">
    <location>
        <begin position="1"/>
        <end position="887"/>
    </location>
</feature>
<feature type="binding site" evidence="1">
    <location>
        <position position="564"/>
    </location>
    <ligand>
        <name>Zn(2+)</name>
        <dbReference type="ChEBI" id="CHEBI:29105"/>
    </ligand>
</feature>
<feature type="binding site" evidence="1">
    <location>
        <position position="568"/>
    </location>
    <ligand>
        <name>Zn(2+)</name>
        <dbReference type="ChEBI" id="CHEBI:29105"/>
    </ligand>
</feature>
<feature type="binding site" evidence="1">
    <location>
        <position position="676"/>
    </location>
    <ligand>
        <name>Zn(2+)</name>
        <dbReference type="ChEBI" id="CHEBI:29105"/>
    </ligand>
</feature>
<feature type="binding site" evidence="1">
    <location>
        <position position="680"/>
    </location>
    <ligand>
        <name>Zn(2+)</name>
        <dbReference type="ChEBI" id="CHEBI:29105"/>
    </ligand>
</feature>
<organism>
    <name type="scientific">Sinorhizobium medicae (strain WSM419)</name>
    <name type="common">Ensifer medicae</name>
    <dbReference type="NCBI Taxonomy" id="366394"/>
    <lineage>
        <taxon>Bacteria</taxon>
        <taxon>Pseudomonadati</taxon>
        <taxon>Pseudomonadota</taxon>
        <taxon>Alphaproteobacteria</taxon>
        <taxon>Hyphomicrobiales</taxon>
        <taxon>Rhizobiaceae</taxon>
        <taxon>Sinorhizobium/Ensifer group</taxon>
        <taxon>Sinorhizobium</taxon>
    </lineage>
</organism>